<organism>
    <name type="scientific">Danio rerio</name>
    <name type="common">Zebrafish</name>
    <name type="synonym">Brachydanio rerio</name>
    <dbReference type="NCBI Taxonomy" id="7955"/>
    <lineage>
        <taxon>Eukaryota</taxon>
        <taxon>Metazoa</taxon>
        <taxon>Chordata</taxon>
        <taxon>Craniata</taxon>
        <taxon>Vertebrata</taxon>
        <taxon>Euteleostomi</taxon>
        <taxon>Actinopterygii</taxon>
        <taxon>Neopterygii</taxon>
        <taxon>Teleostei</taxon>
        <taxon>Ostariophysi</taxon>
        <taxon>Cypriniformes</taxon>
        <taxon>Danionidae</taxon>
        <taxon>Danioninae</taxon>
        <taxon>Danio</taxon>
    </lineage>
</organism>
<sequence>MEDFAVSFWIYIGVMSIFVGGAVKKFLAFNIGAMPSVVVWLGATLLVERLCALCMPAVLARLVLCVCCWLYFTWATPKPSLPVEDKAVFITGCDSGFGNATAKKLDAMGFEVFATVLNLEGEGAKHLRKVCSSRLTLLQVDITQPQQVQQALLDTKAKLGIRDLWGLVNNAGWCVNIGDAELSLMSNYRGCMEVNFFGTVTVTRTFLPLLRQSKGRIVTISSPSGEHPFPCLASYGASKAALNLFINTLRHELDPWGVKVSTILPSAYKTGQSSNAEYWEKQYKSLLQGLSPNLLEEYGEEYLLETKELFQNYAKTANEDLSPVIDTIVEALLSPQPQVRYYAGPGLILMYFICSYLPLSISDRFLQKLFVQKKVMPRALIKQQGLSPNDNNNSIKENMNDSSSNNSNFTKCID</sequence>
<protein>
    <recommendedName>
        <fullName evidence="9">11-beta-hydroxysteroid dehydrogenase type 2</fullName>
        <shortName>11-DH2</shortName>
        <shortName evidence="9 11">11-beta-HSD2</shortName>
    </recommendedName>
    <alternativeName>
        <fullName>11-beta-hydroxysteroid dehydrogenase type II</fullName>
        <shortName>11-HSD type II</shortName>
        <shortName>11-beta-HSD type II</shortName>
    </alternativeName>
    <alternativeName>
        <fullName evidence="12">Corticosteroid 11-beta-dehydrogenase isozyme 2</fullName>
    </alternativeName>
    <alternativeName>
        <fullName>NAD-dependent 11-beta-hydroxysteroid dehydrogenase</fullName>
    </alternativeName>
</protein>
<keyword id="KW-0443">Lipid metabolism</keyword>
<keyword id="KW-0472">Membrane</keyword>
<keyword id="KW-0560">Oxidoreductase</keyword>
<keyword id="KW-1185">Reference proteome</keyword>
<keyword id="KW-0753">Steroid metabolism</keyword>
<keyword id="KW-0812">Transmembrane</keyword>
<keyword id="KW-1133">Transmembrane helix</keyword>
<feature type="chain" id="PRO_0000455007" description="11-beta-hydroxysteroid dehydrogenase type 2">
    <location>
        <begin position="1"/>
        <end position="414"/>
    </location>
</feature>
<feature type="transmembrane region" description="Helical" evidence="2">
    <location>
        <begin position="3"/>
        <end position="23"/>
    </location>
</feature>
<feature type="transmembrane region" description="Helical" evidence="2">
    <location>
        <begin position="26"/>
        <end position="46"/>
    </location>
</feature>
<feature type="transmembrane region" description="Helical" evidence="2">
    <location>
        <begin position="52"/>
        <end position="72"/>
    </location>
</feature>
<feature type="transmembrane region" description="Helical" evidence="2">
    <location>
        <begin position="341"/>
        <end position="361"/>
    </location>
</feature>
<feature type="region of interest" description="Disordered" evidence="3">
    <location>
        <begin position="382"/>
        <end position="414"/>
    </location>
</feature>
<feature type="compositionally biased region" description="Polar residues" evidence="3">
    <location>
        <begin position="384"/>
        <end position="397"/>
    </location>
</feature>
<name>DHI2_DANRE</name>
<accession>F1QLP1</accession>
<accession>Q6P0H9</accession>
<dbReference type="EMBL" id="CR381641">
    <property type="status" value="NOT_ANNOTATED_CDS"/>
    <property type="molecule type" value="Genomic_DNA"/>
</dbReference>
<dbReference type="EMBL" id="BC065613">
    <property type="protein sequence ID" value="AAH65613.1"/>
    <property type="molecule type" value="mRNA"/>
</dbReference>
<dbReference type="RefSeq" id="NP_997885.2">
    <property type="nucleotide sequence ID" value="NM_212720.2"/>
</dbReference>
<dbReference type="SMR" id="F1QLP1"/>
<dbReference type="FunCoup" id="F1QLP1">
    <property type="interactions" value="91"/>
</dbReference>
<dbReference type="STRING" id="7955.ENSDARP00000118501"/>
<dbReference type="PaxDb" id="7955-ENSDARP00000118501"/>
<dbReference type="Ensembl" id="ENSDART00000141211">
    <property type="protein sequence ID" value="ENSDARP00000118501"/>
    <property type="gene ID" value="ENSDARG00000001975"/>
</dbReference>
<dbReference type="GeneID" id="334098"/>
<dbReference type="KEGG" id="dre:334098"/>
<dbReference type="AGR" id="ZFIN:ZDB-GENE-030131-6030"/>
<dbReference type="CTD" id="3291"/>
<dbReference type="ZFIN" id="ZDB-GENE-030131-6030">
    <property type="gene designation" value="hsd11b2"/>
</dbReference>
<dbReference type="eggNOG" id="KOG1610">
    <property type="taxonomic scope" value="Eukaryota"/>
</dbReference>
<dbReference type="HOGENOM" id="CLU_010194_2_0_1"/>
<dbReference type="InParanoid" id="F1QLP1"/>
<dbReference type="OMA" id="WEKQYKS"/>
<dbReference type="OrthoDB" id="9876299at2759"/>
<dbReference type="PhylomeDB" id="F1QLP1"/>
<dbReference type="TreeFam" id="TF325617"/>
<dbReference type="BRENDA" id="1.1.1.146">
    <property type="organism ID" value="928"/>
</dbReference>
<dbReference type="Reactome" id="R-DRE-194002">
    <property type="pathway name" value="Glucocorticoid biosynthesis"/>
</dbReference>
<dbReference type="Reactome" id="R-DRE-9757110">
    <property type="pathway name" value="Prednisone ADME"/>
</dbReference>
<dbReference type="PRO" id="PR:F1QLP1"/>
<dbReference type="Proteomes" id="UP000000437">
    <property type="component" value="Chromosome 7"/>
</dbReference>
<dbReference type="Bgee" id="ENSDARG00000001975">
    <property type="expression patterns" value="Expressed in pharyngeal gill and 44 other cell types or tissues"/>
</dbReference>
<dbReference type="GO" id="GO:0043231">
    <property type="term" value="C:intracellular membrane-bounded organelle"/>
    <property type="evidence" value="ECO:0000318"/>
    <property type="project" value="GO_Central"/>
</dbReference>
<dbReference type="GO" id="GO:0016020">
    <property type="term" value="C:membrane"/>
    <property type="evidence" value="ECO:0007669"/>
    <property type="project" value="UniProtKB-SubCell"/>
</dbReference>
<dbReference type="GO" id="GO:0070523">
    <property type="term" value="F:11-beta-hydroxysteroid dehydrogenase (NAD+) activity"/>
    <property type="evidence" value="ECO:0000314"/>
    <property type="project" value="ZFIN"/>
</dbReference>
<dbReference type="GO" id="GO:0034650">
    <property type="term" value="P:cortisol metabolic process"/>
    <property type="evidence" value="ECO:0000314"/>
    <property type="project" value="ZFIN"/>
</dbReference>
<dbReference type="GO" id="GO:0008211">
    <property type="term" value="P:glucocorticoid metabolic process"/>
    <property type="evidence" value="ECO:0000318"/>
    <property type="project" value="GO_Central"/>
</dbReference>
<dbReference type="GO" id="GO:0033555">
    <property type="term" value="P:multicellular organismal response to stress"/>
    <property type="evidence" value="ECO:0000314"/>
    <property type="project" value="ZFIN"/>
</dbReference>
<dbReference type="CDD" id="cd09805">
    <property type="entry name" value="type2_17beta_HSD-like_SDR_c"/>
    <property type="match status" value="1"/>
</dbReference>
<dbReference type="FunFam" id="3.40.50.720:FF:000074">
    <property type="entry name" value="Retinol dehydrogenase type 1"/>
    <property type="match status" value="1"/>
</dbReference>
<dbReference type="Gene3D" id="3.40.50.720">
    <property type="entry name" value="NAD(P)-binding Rossmann-like Domain"/>
    <property type="match status" value="1"/>
</dbReference>
<dbReference type="InterPro" id="IPR036291">
    <property type="entry name" value="NAD(P)-bd_dom_sf"/>
</dbReference>
<dbReference type="InterPro" id="IPR020904">
    <property type="entry name" value="Sc_DH/Rdtase_CS"/>
</dbReference>
<dbReference type="InterPro" id="IPR002347">
    <property type="entry name" value="SDR_fam"/>
</dbReference>
<dbReference type="PANTHER" id="PTHR43313:SF2">
    <property type="entry name" value="11-BETA-HYDROXYSTEROID DEHYDROGENASE TYPE 2"/>
    <property type="match status" value="1"/>
</dbReference>
<dbReference type="PANTHER" id="PTHR43313">
    <property type="entry name" value="SHORT-CHAIN DEHYDROGENASE/REDUCTASE FAMILY 9C"/>
    <property type="match status" value="1"/>
</dbReference>
<dbReference type="Pfam" id="PF00106">
    <property type="entry name" value="adh_short"/>
    <property type="match status" value="1"/>
</dbReference>
<dbReference type="PRINTS" id="PR00081">
    <property type="entry name" value="GDHRDH"/>
</dbReference>
<dbReference type="SUPFAM" id="SSF51735">
    <property type="entry name" value="NAD(P)-binding Rossmann-fold domains"/>
    <property type="match status" value="1"/>
</dbReference>
<dbReference type="PROSITE" id="PS00061">
    <property type="entry name" value="ADH_SHORT"/>
    <property type="match status" value="1"/>
</dbReference>
<reference key="1">
    <citation type="submission" date="2011-07" db="UniProtKB">
        <authorList>
            <consortium name="Ensembl"/>
        </authorList>
    </citation>
    <scope>IDENTIFICATION</scope>
    <source>
        <strain>Tuebingen</strain>
    </source>
</reference>
<reference key="2">
    <citation type="journal article" date="2013" name="Nature">
        <title>The zebrafish reference genome sequence and its relationship to the human genome.</title>
        <authorList>
            <person name="Howe K."/>
            <person name="Clark M.D."/>
            <person name="Torroja C.F."/>
            <person name="Torrance J."/>
            <person name="Berthelot C."/>
            <person name="Muffato M."/>
            <person name="Collins J.E."/>
            <person name="Humphray S."/>
            <person name="McLaren K."/>
            <person name="Matthews L."/>
            <person name="McLaren S."/>
            <person name="Sealy I."/>
            <person name="Caccamo M."/>
            <person name="Churcher C."/>
            <person name="Scott C."/>
            <person name="Barrett J.C."/>
            <person name="Koch R."/>
            <person name="Rauch G.J."/>
            <person name="White S."/>
            <person name="Chow W."/>
            <person name="Kilian B."/>
            <person name="Quintais L.T."/>
            <person name="Guerra-Assuncao J.A."/>
            <person name="Zhou Y."/>
            <person name="Gu Y."/>
            <person name="Yen J."/>
            <person name="Vogel J.H."/>
            <person name="Eyre T."/>
            <person name="Redmond S."/>
            <person name="Banerjee R."/>
            <person name="Chi J."/>
            <person name="Fu B."/>
            <person name="Langley E."/>
            <person name="Maguire S.F."/>
            <person name="Laird G.K."/>
            <person name="Lloyd D."/>
            <person name="Kenyon E."/>
            <person name="Donaldson S."/>
            <person name="Sehra H."/>
            <person name="Almeida-King J."/>
            <person name="Loveland J."/>
            <person name="Trevanion S."/>
            <person name="Jones M."/>
            <person name="Quail M."/>
            <person name="Willey D."/>
            <person name="Hunt A."/>
            <person name="Burton J."/>
            <person name="Sims S."/>
            <person name="McLay K."/>
            <person name="Plumb B."/>
            <person name="Davis J."/>
            <person name="Clee C."/>
            <person name="Oliver K."/>
            <person name="Clark R."/>
            <person name="Riddle C."/>
            <person name="Elliot D."/>
            <person name="Threadgold G."/>
            <person name="Harden G."/>
            <person name="Ware D."/>
            <person name="Begum S."/>
            <person name="Mortimore B."/>
            <person name="Kerry G."/>
            <person name="Heath P."/>
            <person name="Phillimore B."/>
            <person name="Tracey A."/>
            <person name="Corby N."/>
            <person name="Dunn M."/>
            <person name="Johnson C."/>
            <person name="Wood J."/>
            <person name="Clark S."/>
            <person name="Pelan S."/>
            <person name="Griffiths G."/>
            <person name="Smith M."/>
            <person name="Glithero R."/>
            <person name="Howden P."/>
            <person name="Barker N."/>
            <person name="Lloyd C."/>
            <person name="Stevens C."/>
            <person name="Harley J."/>
            <person name="Holt K."/>
            <person name="Panagiotidis G."/>
            <person name="Lovell J."/>
            <person name="Beasley H."/>
            <person name="Henderson C."/>
            <person name="Gordon D."/>
            <person name="Auger K."/>
            <person name="Wright D."/>
            <person name="Collins J."/>
            <person name="Raisen C."/>
            <person name="Dyer L."/>
            <person name="Leung K."/>
            <person name="Robertson L."/>
            <person name="Ambridge K."/>
            <person name="Leongamornlert D."/>
            <person name="McGuire S."/>
            <person name="Gilderthorp R."/>
            <person name="Griffiths C."/>
            <person name="Manthravadi D."/>
            <person name="Nichol S."/>
            <person name="Barker G."/>
            <person name="Whitehead S."/>
            <person name="Kay M."/>
            <person name="Brown J."/>
            <person name="Murnane C."/>
            <person name="Gray E."/>
            <person name="Humphries M."/>
            <person name="Sycamore N."/>
            <person name="Barker D."/>
            <person name="Saunders D."/>
            <person name="Wallis J."/>
            <person name="Babbage A."/>
            <person name="Hammond S."/>
            <person name="Mashreghi-Mohammadi M."/>
            <person name="Barr L."/>
            <person name="Martin S."/>
            <person name="Wray P."/>
            <person name="Ellington A."/>
            <person name="Matthews N."/>
            <person name="Ellwood M."/>
            <person name="Woodmansey R."/>
            <person name="Clark G."/>
            <person name="Cooper J."/>
            <person name="Tromans A."/>
            <person name="Grafham D."/>
            <person name="Skuce C."/>
            <person name="Pandian R."/>
            <person name="Andrews R."/>
            <person name="Harrison E."/>
            <person name="Kimberley A."/>
            <person name="Garnett J."/>
            <person name="Fosker N."/>
            <person name="Hall R."/>
            <person name="Garner P."/>
            <person name="Kelly D."/>
            <person name="Bird C."/>
            <person name="Palmer S."/>
            <person name="Gehring I."/>
            <person name="Berger A."/>
            <person name="Dooley C.M."/>
            <person name="Ersan-Urun Z."/>
            <person name="Eser C."/>
            <person name="Geiger H."/>
            <person name="Geisler M."/>
            <person name="Karotki L."/>
            <person name="Kirn A."/>
            <person name="Konantz J."/>
            <person name="Konantz M."/>
            <person name="Oberlander M."/>
            <person name="Rudolph-Geiger S."/>
            <person name="Teucke M."/>
            <person name="Lanz C."/>
            <person name="Raddatz G."/>
            <person name="Osoegawa K."/>
            <person name="Zhu B."/>
            <person name="Rapp A."/>
            <person name="Widaa S."/>
            <person name="Langford C."/>
            <person name="Yang F."/>
            <person name="Schuster S.C."/>
            <person name="Carter N.P."/>
            <person name="Harrow J."/>
            <person name="Ning Z."/>
            <person name="Herrero J."/>
            <person name="Searle S.M."/>
            <person name="Enright A."/>
            <person name="Geisler R."/>
            <person name="Plasterk R.H."/>
            <person name="Lee C."/>
            <person name="Westerfield M."/>
            <person name="de Jong P.J."/>
            <person name="Zon L.I."/>
            <person name="Postlethwait J.H."/>
            <person name="Nusslein-Volhard C."/>
            <person name="Hubbard T.J."/>
            <person name="Roest Crollius H."/>
            <person name="Rogers J."/>
            <person name="Stemple D.L."/>
        </authorList>
    </citation>
    <scope>NUCLEOTIDE SEQUENCE [LARGE SCALE GENOMIC DNA]</scope>
    <source>
        <strain>Tuebingen</strain>
    </source>
</reference>
<reference key="3">
    <citation type="submission" date="2004-01" db="EMBL/GenBank/DDBJ databases">
        <authorList>
            <consortium name="NIH - Zebrafish Gene Collection (ZGC) project"/>
        </authorList>
    </citation>
    <scope>NUCLEOTIDE SEQUENCE [LARGE SCALE MRNA] OF 15-414</scope>
    <source>
        <tissue>Kidney</tissue>
    </source>
</reference>
<reference key="4">
    <citation type="journal article" date="2012" name="Toxicology">
        <title>Species-specific differences in the inhibition of human and zebrafish 11beta-hydroxysteroid dehydrogenase 2 by thiram and organotins.</title>
        <authorList>
            <person name="Meyer A."/>
            <person name="Strajhar P."/>
            <person name="Murer C."/>
            <person name="Da Cunha T."/>
            <person name="Odermatt A."/>
        </authorList>
    </citation>
    <scope>FUNCTION</scope>
    <scope>CATALYTIC ACTIVITY</scope>
    <scope>BIOPHYSICOCHEMICAL PROPERTIES</scope>
</reference>
<reference key="5">
    <citation type="journal article" date="2012" name="J. Endocrinol.">
        <title>11beta-Hydroxysteroid dehydrogenase type 2 in zebrafish brain: a functional role in hypothalamus-pituitary-interrenal axis regulation.</title>
        <authorList>
            <person name="Alderman S.L."/>
            <person name="Vijayan M.M."/>
        </authorList>
    </citation>
    <scope>FUNCTION</scope>
    <scope>CATALYTIC ACTIVITY</scope>
    <scope>TISSUE SPECIFICITY</scope>
</reference>
<reference key="6">
    <citation type="journal article" date="2017" name="J. Endocrinol.">
        <title>Absence of 11-keto reduction of cortisone and 11-ketotestosterone in the model organism zebrafish.</title>
        <authorList>
            <person name="Tsachaki M."/>
            <person name="Meyer A."/>
            <person name="Weger B."/>
            <person name="Kratschmar D.V."/>
            <person name="Tokarz J."/>
            <person name="Adamski J."/>
            <person name="Belting H.G."/>
            <person name="Affolter M."/>
            <person name="Dickmeis T."/>
            <person name="Odermatt A."/>
        </authorList>
    </citation>
    <scope>FUNCTION</scope>
    <scope>CATALYTIC ACTIVITY</scope>
</reference>
<reference key="7">
    <citation type="journal article" date="2021" name="Toxicol. Appl. Pharmacol.">
        <title>Species-specific differences in the inhibition of 11beta-hydroxysteroid dehydrogenase 2 by itraconazole and posaconazole.</title>
        <authorList>
            <person name="Inderbinen S.G."/>
            <person name="Zogg M."/>
            <person name="Kley M."/>
            <person name="Smiesko M."/>
            <person name="Odermatt A."/>
        </authorList>
    </citation>
    <scope>FUNCTION</scope>
    <scope>CATALYTIC ACTIVITY</scope>
</reference>
<proteinExistence type="evidence at protein level"/>
<comment type="function">
    <text evidence="4 5 6 7 8 9 10">Catalyzes the conversion of biologically active 11beta-hydroxyglucocorticoids (11beta-hydroxysteroid) such as cortisol, to inactive 11-ketoglucocorticoids (11-oxosteroid) such as cortisone, in the presence of NAD(+) (PubMed:22796344, PubMed:23042946, PubMed:27927697, PubMed:33387577). Cortisol is the primary glucocorticoid in teleosts and is released to increase glucose bioavailability in order to meet the increased energy demands in response to stress (PubMed:23042946). Functions as a dehydrogenase (oxidase), thereby decreasing the concentration of active glucocorticoids, regulating the hypothalamus-pituitary-interrenal (HPI) axis function in adult fish (PubMed:23042946). Decreasing the excess glucocorticoids may be of relevance to brain function and neural proliferation (PubMed:23042946). Plays a key role by catalyzing the oxidation of 11beta-hydroxytestosterone (11beta,17beta-dihydroxyandrost-4-ene-3-one) to 11-ketotestosterone (17beta-hydroxyandrost-4-ene-3,11-dione), the major fish androgen, that activates androgen receptor transcriptional activity (PubMed:22796344, PubMed:27927697). Catalyzes the conversion of 11beta-hydroxyandrostenedione (11beta-hydroxyandrost-4-ene-3,17-dione) to 11-ketoandrostenedione (androst-4-ene-3,11,17-trione), which can be further metabolized to 11-ketotestosterone (PubMed:27927697). Exerts a dual role in fish by inactivating glucocorticoids and activating androgens (PubMed:22796344, PubMed:27927697).</text>
</comment>
<comment type="catalytic activity">
    <reaction evidence="4 5 6 7">
        <text>an 11beta-hydroxysteroid + NAD(+) = an 11-oxosteroid + NADH + H(+)</text>
        <dbReference type="Rhea" id="RHEA:53116"/>
        <dbReference type="ChEBI" id="CHEBI:15378"/>
        <dbReference type="ChEBI" id="CHEBI:35346"/>
        <dbReference type="ChEBI" id="CHEBI:47787"/>
        <dbReference type="ChEBI" id="CHEBI:57540"/>
        <dbReference type="ChEBI" id="CHEBI:57945"/>
    </reaction>
    <physiologicalReaction direction="left-to-right" evidence="5 13 14 15">
        <dbReference type="Rhea" id="RHEA:53117"/>
    </physiologicalReaction>
</comment>
<comment type="catalytic activity">
    <reaction evidence="4 5 7">
        <text>cortisol + NAD(+) = cortisone + NADH + H(+)</text>
        <dbReference type="Rhea" id="RHEA:50208"/>
        <dbReference type="ChEBI" id="CHEBI:15378"/>
        <dbReference type="ChEBI" id="CHEBI:16962"/>
        <dbReference type="ChEBI" id="CHEBI:17650"/>
        <dbReference type="ChEBI" id="CHEBI:57540"/>
        <dbReference type="ChEBI" id="CHEBI:57945"/>
    </reaction>
    <physiologicalReaction direction="left-to-right" evidence="5 13 15">
        <dbReference type="Rhea" id="RHEA:50209"/>
    </physiologicalReaction>
</comment>
<comment type="catalytic activity">
    <reaction evidence="4">
        <text>corticosterone + NAD(+) = 11-dehydrocorticosterone + NADH + H(+)</text>
        <dbReference type="Rhea" id="RHEA:42204"/>
        <dbReference type="ChEBI" id="CHEBI:15378"/>
        <dbReference type="ChEBI" id="CHEBI:16827"/>
        <dbReference type="ChEBI" id="CHEBI:57540"/>
        <dbReference type="ChEBI" id="CHEBI:57945"/>
        <dbReference type="ChEBI" id="CHEBI:78600"/>
    </reaction>
    <physiologicalReaction direction="left-to-right" evidence="13">
        <dbReference type="Rhea" id="RHEA:42205"/>
    </physiologicalReaction>
</comment>
<comment type="catalytic activity">
    <reaction evidence="4 6">
        <text>11beta,17beta-dihydroxyandrost-4-ene-3-one + NAD(+) = 17beta-hydroxyandrost-4-ene-3,11-dione + NADH + H(+)</text>
        <dbReference type="Rhea" id="RHEA:69368"/>
        <dbReference type="ChEBI" id="CHEBI:15378"/>
        <dbReference type="ChEBI" id="CHEBI:34133"/>
        <dbReference type="ChEBI" id="CHEBI:57540"/>
        <dbReference type="ChEBI" id="CHEBI:57945"/>
        <dbReference type="ChEBI" id="CHEBI:81481"/>
    </reaction>
    <physiologicalReaction direction="left-to-right" evidence="13 14">
        <dbReference type="Rhea" id="RHEA:69369"/>
    </physiologicalReaction>
</comment>
<comment type="catalytic activity">
    <reaction evidence="1">
        <text>11beta-hydroxyandrost-4-ene-3,17-dione + NAD(+) = androst-4-ene-3,11,17-trione + NADH + H(+)</text>
        <dbReference type="Rhea" id="RHEA:69408"/>
        <dbReference type="ChEBI" id="CHEBI:2495"/>
        <dbReference type="ChEBI" id="CHEBI:15378"/>
        <dbReference type="ChEBI" id="CHEBI:27967"/>
        <dbReference type="ChEBI" id="CHEBI:57540"/>
        <dbReference type="ChEBI" id="CHEBI:57945"/>
    </reaction>
    <physiologicalReaction direction="left-to-right" evidence="1">
        <dbReference type="Rhea" id="RHEA:69409"/>
    </physiologicalReaction>
</comment>
<comment type="biophysicochemical properties">
    <kinetics>
        <KM evidence="4">72 nM for cortisol</KM>
        <KM evidence="4">147 nM for corticosterone</KM>
        <KM evidence="4">206 nM for 11beta,17beta-dihydroxyandrost-4-ene-3-one</KM>
    </kinetics>
</comment>
<comment type="pathway">
    <text evidence="12">Steroid metabolism.</text>
</comment>
<comment type="subcellular location">
    <subcellularLocation>
        <location evidence="2">Membrane</location>
        <topology evidence="2">Multi-pass membrane protein</topology>
    </subcellularLocation>
</comment>
<comment type="tissue specificity">
    <text evidence="5">Broadly expressed in peripheral (brain, gill, eye, heart, liver, head kidney, posterior kidney, and gut).</text>
</comment>
<comment type="miscellaneous">
    <text evidence="10">As zebrafish lack the enzyme catalyzing the reverse reaction (HSD11B1), cortisone cannot be recycled, it is metabolized and excreted (PubMed:27927697). To maintain glucocorticoid signaling a new cortisol molecule must be synthesized (PubMed:27927697).</text>
</comment>
<comment type="similarity">
    <text evidence="12">Belongs to the short-chain dehydrogenases/reductases (SDR) family.</text>
</comment>
<gene>
    <name type="primary">hsd11b2</name>
</gene>
<evidence type="ECO:0000250" key="1">
    <source>
        <dbReference type="UniProtKB" id="P80365"/>
    </source>
</evidence>
<evidence type="ECO:0000255" key="2"/>
<evidence type="ECO:0000256" key="3">
    <source>
        <dbReference type="SAM" id="MobiDB-lite"/>
    </source>
</evidence>
<evidence type="ECO:0000269" key="4">
    <source>
    </source>
</evidence>
<evidence type="ECO:0000269" key="5">
    <source>
    </source>
</evidence>
<evidence type="ECO:0000269" key="6">
    <source>
    </source>
</evidence>
<evidence type="ECO:0000269" key="7">
    <source>
    </source>
</evidence>
<evidence type="ECO:0000303" key="8">
    <source>
    </source>
</evidence>
<evidence type="ECO:0000303" key="9">
    <source>
    </source>
</evidence>
<evidence type="ECO:0000303" key="10">
    <source>
    </source>
</evidence>
<evidence type="ECO:0000303" key="11">
    <source>
    </source>
</evidence>
<evidence type="ECO:0000305" key="12"/>
<evidence type="ECO:0000305" key="13">
    <source>
    </source>
</evidence>
<evidence type="ECO:0000305" key="14">
    <source>
    </source>
</evidence>
<evidence type="ECO:0000305" key="15">
    <source>
    </source>
</evidence>